<evidence type="ECO:0000305" key="1">
    <source>
    </source>
</evidence>
<organism>
    <name type="scientific">Mycobacterium tuberculosis (strain ATCC 25618 / H37Rv)</name>
    <dbReference type="NCBI Taxonomy" id="83332"/>
    <lineage>
        <taxon>Bacteria</taxon>
        <taxon>Bacillati</taxon>
        <taxon>Actinomycetota</taxon>
        <taxon>Actinomycetes</taxon>
        <taxon>Mycobacteriales</taxon>
        <taxon>Mycobacteriaceae</taxon>
        <taxon>Mycobacterium</taxon>
        <taxon>Mycobacterium tuberculosis complex</taxon>
    </lineage>
</organism>
<keyword id="KW-1185">Reference proteome</keyword>
<keyword id="KW-1277">Toxin-antitoxin system</keyword>
<proteinExistence type="evidence at protein level"/>
<reference key="1">
    <citation type="journal article" date="1998" name="Nature">
        <title>Deciphering the biology of Mycobacterium tuberculosis from the complete genome sequence.</title>
        <authorList>
            <person name="Cole S.T."/>
            <person name="Brosch R."/>
            <person name="Parkhill J."/>
            <person name="Garnier T."/>
            <person name="Churcher C.M."/>
            <person name="Harris D.E."/>
            <person name="Gordon S.V."/>
            <person name="Eiglmeier K."/>
            <person name="Gas S."/>
            <person name="Barry C.E. III"/>
            <person name="Tekaia F."/>
            <person name="Badcock K."/>
            <person name="Basham D."/>
            <person name="Brown D."/>
            <person name="Chillingworth T."/>
            <person name="Connor R."/>
            <person name="Davies R.M."/>
            <person name="Devlin K."/>
            <person name="Feltwell T."/>
            <person name="Gentles S."/>
            <person name="Hamlin N."/>
            <person name="Holroyd S."/>
            <person name="Hornsby T."/>
            <person name="Jagels K."/>
            <person name="Krogh A."/>
            <person name="McLean J."/>
            <person name="Moule S."/>
            <person name="Murphy L.D."/>
            <person name="Oliver S."/>
            <person name="Osborne J."/>
            <person name="Quail M.A."/>
            <person name="Rajandream M.A."/>
            <person name="Rogers J."/>
            <person name="Rutter S."/>
            <person name="Seeger K."/>
            <person name="Skelton S."/>
            <person name="Squares S."/>
            <person name="Squares R."/>
            <person name="Sulston J.E."/>
            <person name="Taylor K."/>
            <person name="Whitehead S."/>
            <person name="Barrell B.G."/>
        </authorList>
    </citation>
    <scope>NUCLEOTIDE SEQUENCE [LARGE SCALE GENOMIC DNA]</scope>
    <source>
        <strain>ATCC 25618 / H37Rv</strain>
    </source>
</reference>
<reference key="2">
    <citation type="journal article" date="2005" name="Nucleic Acids Res.">
        <title>Toxin-antitoxin loci are highly abundant in free-living but lost from host-associated prokaryotes.</title>
        <authorList>
            <person name="Pandey D.P."/>
            <person name="Gerdes K."/>
        </authorList>
    </citation>
    <scope>POSSIBLE FUNCTION</scope>
    <source>
        <strain>ATCC 25618 / H37Rv</strain>
    </source>
</reference>
<reference key="3">
    <citation type="journal article" date="2011" name="Mol. Cell. Proteomics">
        <title>Proteogenomic analysis of Mycobacterium tuberculosis by high resolution mass spectrometry.</title>
        <authorList>
            <person name="Kelkar D.S."/>
            <person name="Kumar D."/>
            <person name="Kumar P."/>
            <person name="Balakrishnan L."/>
            <person name="Muthusamy B."/>
            <person name="Yadav A.K."/>
            <person name="Shrivastava P."/>
            <person name="Marimuthu A."/>
            <person name="Anand S."/>
            <person name="Sundaram H."/>
            <person name="Kingsbury R."/>
            <person name="Harsha H.C."/>
            <person name="Nair B."/>
            <person name="Prasad T.S."/>
            <person name="Chauhan D.S."/>
            <person name="Katoch K."/>
            <person name="Katoch V.M."/>
            <person name="Kumar P."/>
            <person name="Chaerkady R."/>
            <person name="Ramachandran S."/>
            <person name="Dash D."/>
            <person name="Pandey A."/>
        </authorList>
    </citation>
    <scope>IDENTIFICATION BY MASS SPECTROMETRY [LARGE SCALE ANALYSIS]</scope>
    <source>
        <strain>ATCC 25618 / H37Rv</strain>
    </source>
</reference>
<accession>P9WJ49</accession>
<accession>L0T9W3</accession>
<accession>P95027</accession>
<accession>Q7D6Z1</accession>
<name>VPB17_MYCTU</name>
<gene>
    <name type="primary">vapB17</name>
    <name type="ordered locus">Rv2526</name>
</gene>
<sequence length="75" mass="8242">MTVKRTTIELDEDLVRAAQAVTGETLRATVERALQQLVAAAAEQAAARRRRIVDHLAHAGTHVDADVLLSEQAWR</sequence>
<feature type="chain" id="PRO_0000408063" description="Putative antitoxin VapB17">
    <location>
        <begin position="1"/>
        <end position="75"/>
    </location>
</feature>
<comment type="function">
    <text evidence="1">Putative antitoxin component of a possible type II toxin-antitoxin (TA) system. The cognate toxin is VapC17.</text>
</comment>
<protein>
    <recommendedName>
        <fullName>Putative antitoxin VapB17</fullName>
    </recommendedName>
</protein>
<dbReference type="EMBL" id="AL123456">
    <property type="protein sequence ID" value="CCP45320.1"/>
    <property type="molecule type" value="Genomic_DNA"/>
</dbReference>
<dbReference type="PIR" id="B70657">
    <property type="entry name" value="B70657"/>
</dbReference>
<dbReference type="RefSeq" id="NP_217042.1">
    <property type="nucleotide sequence ID" value="NC_000962.3"/>
</dbReference>
<dbReference type="RefSeq" id="WP_003412960.1">
    <property type="nucleotide sequence ID" value="NZ_NVQJ01000032.1"/>
</dbReference>
<dbReference type="SMR" id="P9WJ49"/>
<dbReference type="STRING" id="83332.Rv2526"/>
<dbReference type="PaxDb" id="83332-Rv2526"/>
<dbReference type="DNASU" id="888254"/>
<dbReference type="GeneID" id="888254"/>
<dbReference type="KEGG" id="mtu:Rv2526"/>
<dbReference type="KEGG" id="mtv:RVBD_2526"/>
<dbReference type="TubercuList" id="Rv2526"/>
<dbReference type="eggNOG" id="ENOG5033NFK">
    <property type="taxonomic scope" value="Bacteria"/>
</dbReference>
<dbReference type="InParanoid" id="P9WJ49"/>
<dbReference type="Proteomes" id="UP000001584">
    <property type="component" value="Chromosome"/>
</dbReference>
<dbReference type="InterPro" id="IPR019239">
    <property type="entry name" value="VapB_antitoxin"/>
</dbReference>
<dbReference type="Pfam" id="PF09957">
    <property type="entry name" value="VapB_antitoxin"/>
    <property type="match status" value="1"/>
</dbReference>